<keyword id="KW-0186">Copper</keyword>
<keyword id="KW-0903">Direct protein sequencing</keyword>
<keyword id="KW-1015">Disulfide bond</keyword>
<keyword id="KW-0325">Glycoprotein</keyword>
<keyword id="KW-0479">Metal-binding</keyword>
<keyword id="KW-0561">Oxygen transport</keyword>
<keyword id="KW-0964">Secreted</keyword>
<keyword id="KW-0813">Transport</keyword>
<dbReference type="SMR" id="P80888"/>
<dbReference type="GO" id="GO:0005576">
    <property type="term" value="C:extracellular region"/>
    <property type="evidence" value="ECO:0007669"/>
    <property type="project" value="UniProtKB-SubCell"/>
</dbReference>
<dbReference type="GO" id="GO:0046872">
    <property type="term" value="F:metal ion binding"/>
    <property type="evidence" value="ECO:0007669"/>
    <property type="project" value="UniProtKB-KW"/>
</dbReference>
<dbReference type="GO" id="GO:0016491">
    <property type="term" value="F:oxidoreductase activity"/>
    <property type="evidence" value="ECO:0007669"/>
    <property type="project" value="InterPro"/>
</dbReference>
<dbReference type="GO" id="GO:0005344">
    <property type="term" value="F:oxygen carrier activity"/>
    <property type="evidence" value="ECO:0007669"/>
    <property type="project" value="UniProtKB-KW"/>
</dbReference>
<dbReference type="Gene3D" id="1.10.1280.10">
    <property type="entry name" value="Di-copper center containing domain from catechol oxidase"/>
    <property type="match status" value="1"/>
</dbReference>
<dbReference type="Gene3D" id="2.60.40.1520">
    <property type="entry name" value="Hemocyanin, C-terminal domain"/>
    <property type="match status" value="1"/>
</dbReference>
<dbReference type="Gene3D" id="1.20.1370.10">
    <property type="entry name" value="Hemocyanin, N-terminal domain"/>
    <property type="match status" value="1"/>
</dbReference>
<dbReference type="InterPro" id="IPR008922">
    <property type="entry name" value="Di-copper_centre_dom_sf"/>
</dbReference>
<dbReference type="InterPro" id="IPR013788">
    <property type="entry name" value="Hemocyanin/hexamerin"/>
</dbReference>
<dbReference type="InterPro" id="IPR000896">
    <property type="entry name" value="Hemocyanin/hexamerin_mid_dom"/>
</dbReference>
<dbReference type="InterPro" id="IPR005203">
    <property type="entry name" value="Hemocyanin_C"/>
</dbReference>
<dbReference type="InterPro" id="IPR037020">
    <property type="entry name" value="Hemocyanin_C_sf"/>
</dbReference>
<dbReference type="InterPro" id="IPR005204">
    <property type="entry name" value="Hemocyanin_N"/>
</dbReference>
<dbReference type="InterPro" id="IPR036697">
    <property type="entry name" value="Hemocyanin_N_sf"/>
</dbReference>
<dbReference type="InterPro" id="IPR014756">
    <property type="entry name" value="Ig_E-set"/>
</dbReference>
<dbReference type="InterPro" id="IPR002227">
    <property type="entry name" value="Tyrosinase_Cu-bd"/>
</dbReference>
<dbReference type="PANTHER" id="PTHR11511:SF5">
    <property type="entry name" value="FAT-BODY PROTEIN 1-RELATED"/>
    <property type="match status" value="1"/>
</dbReference>
<dbReference type="PANTHER" id="PTHR11511">
    <property type="entry name" value="LARVAL STORAGE PROTEIN/PHENOLOXIDASE"/>
    <property type="match status" value="1"/>
</dbReference>
<dbReference type="Pfam" id="PF03723">
    <property type="entry name" value="Hemocyanin_C"/>
    <property type="match status" value="1"/>
</dbReference>
<dbReference type="Pfam" id="PF00372">
    <property type="entry name" value="Hemocyanin_M"/>
    <property type="match status" value="1"/>
</dbReference>
<dbReference type="Pfam" id="PF03722">
    <property type="entry name" value="Hemocyanin_N"/>
    <property type="match status" value="1"/>
</dbReference>
<dbReference type="PRINTS" id="PR00187">
    <property type="entry name" value="HAEMOCYANIN"/>
</dbReference>
<dbReference type="SUPFAM" id="SSF48056">
    <property type="entry name" value="Di-copper centre-containing domain"/>
    <property type="match status" value="1"/>
</dbReference>
<dbReference type="SUPFAM" id="SSF81296">
    <property type="entry name" value="E set domains"/>
    <property type="match status" value="1"/>
</dbReference>
<dbReference type="SUPFAM" id="SSF48050">
    <property type="entry name" value="Hemocyanin, N-terminal domain"/>
    <property type="match status" value="1"/>
</dbReference>
<dbReference type="PROSITE" id="PS00210">
    <property type="entry name" value="HEMOCYANIN_2"/>
    <property type="match status" value="1"/>
</dbReference>
<dbReference type="PROSITE" id="PS00498">
    <property type="entry name" value="TYROSINASE_2"/>
    <property type="match status" value="1"/>
</dbReference>
<sequence>DVHSSDNAHKQHDVNHLLDKIYEPIKDEKLHNTAHTFNPVADTSIYGDDGAAAKTLMQKLNDHRLLEEHHWFSLFNTRQREELAMLFTVLNQCKEWDFLNNNAAFFRERMNEGEFVYALYVSVIHSKLGDGIVLPPLYQITPHMFTNSEVIDKAYSAKMTHKEGTFNMSFTGTQKNREQRVAYFGQDIGMNIHHVTWHMDFPFWWDDSYGYHLDRKGELFFWVHHQLTARFDAERFSNWMDPVDELHWDDIIHEGFAPHASYKYGGEFPTRPDNTHFKNVDGVARVRDMEITENRIRDAIAHGYITATDGHTIDIRQPNGIELLGDIIESSMYSSNPHYPGSLHNTAHGMLGRQGDPHGKFNMPPGVMEHFETATRDPSFFRLHKYMDNIFKEHTDSFPPYTHEDLEFPGVSVDNIAIEGHLTTFFDQFKYSLVNAVDSGENVEDVEIYANVHRLNHEEFTYDIEVRNHNEEDKFATVRIFLCPTEDNNGITLNLDEARWLCLELDKFWTKLGDGKNLIERSSKDSSVTVPDMPSFESLKKQADEAVNGGHDLDLSAYERSCGIPDRMLLPKSKPQGMEFNLYVAVTDGDKDTDGSHGDHDHHGTHAQCGIHGELYPDHRPLGYPLERRIPDDRVFDGVSNIKHALVKIVHDPELRA</sequence>
<feature type="chain" id="PRO_0000204290" description="Hemocyanin">
    <location>
        <begin position="1"/>
        <end position="657"/>
    </location>
</feature>
<feature type="binding site" evidence="1">
    <location>
        <position position="194"/>
    </location>
    <ligand>
        <name>Cu cation</name>
        <dbReference type="ChEBI" id="CHEBI:23378"/>
        <label>A</label>
    </ligand>
</feature>
<feature type="binding site" evidence="1">
    <location>
        <position position="198"/>
    </location>
    <ligand>
        <name>Cu cation</name>
        <dbReference type="ChEBI" id="CHEBI:23378"/>
        <label>A</label>
    </ligand>
</feature>
<feature type="binding site" evidence="1">
    <location>
        <position position="224"/>
    </location>
    <ligand>
        <name>Cu cation</name>
        <dbReference type="ChEBI" id="CHEBI:23378"/>
        <label>A</label>
    </ligand>
</feature>
<feature type="binding site" evidence="1">
    <location>
        <position position="344"/>
    </location>
    <ligand>
        <name>Cu cation</name>
        <dbReference type="ChEBI" id="CHEBI:23378"/>
        <label>B</label>
    </ligand>
</feature>
<feature type="binding site" evidence="1">
    <location>
        <position position="348"/>
    </location>
    <ligand>
        <name>Cu cation</name>
        <dbReference type="ChEBI" id="CHEBI:23378"/>
        <label>B</label>
    </ligand>
</feature>
<feature type="binding site" evidence="1">
    <location>
        <position position="384"/>
    </location>
    <ligand>
        <name>Cu cation</name>
        <dbReference type="ChEBI" id="CHEBI:23378"/>
        <label>B</label>
    </ligand>
</feature>
<feature type="glycosylation site" description="N-linked (GlcNAc...) asparagine">
    <location>
        <position position="167"/>
    </location>
</feature>
<feature type="disulfide bond">
    <location>
        <begin position="483"/>
        <end position="502"/>
    </location>
</feature>
<feature type="disulfide bond">
    <location>
        <begin position="562"/>
        <end position="609"/>
    </location>
</feature>
<feature type="sequence variant" description="Depending on subunit.">
    <original>P</original>
    <variation>D</variation>
    <location>
        <position position="24"/>
    </location>
</feature>
<feature type="sequence variant" description="Depending on subunit.">
    <original>K</original>
    <variation>E</variation>
    <location>
        <position position="26"/>
    </location>
</feature>
<feature type="sequence variant" description="Depending on subunit.">
    <original>K</original>
    <variation>E</variation>
    <location>
        <position position="29"/>
    </location>
</feature>
<feature type="sequence variant" description="Depending on subunit.">
    <original>NP</original>
    <variation>DE</variation>
    <location>
        <begin position="38"/>
        <end position="39"/>
    </location>
</feature>
<feature type="sequence variant" description="Depending on subunit.">
    <original>K</original>
    <variation>E</variation>
    <location>
        <position position="59"/>
    </location>
</feature>
<feature type="sequence variant" description="Depending on subunit.">
    <original>R</original>
    <variation>H</variation>
    <location>
        <position position="80"/>
    </location>
</feature>
<feature type="sequence variant" description="Depending on subunit.">
    <original>A</original>
    <variation>E</variation>
    <location>
        <position position="84"/>
    </location>
</feature>
<feature type="sequence variant" description="Depending on subunit.">
    <original>A</original>
    <variation>Q</variation>
    <location>
        <position position="84"/>
    </location>
</feature>
<feature type="sequence variant" description="Depending on subunit.">
    <original>Q</original>
    <variation>K</variation>
    <location>
        <position position="174"/>
    </location>
</feature>
<feature type="sequence variant" description="Depending on subunit.">
    <original>R</original>
    <variation>K</variation>
    <location>
        <position position="177"/>
    </location>
</feature>
<feature type="sequence variant" description="Depending on subunit.">
    <original>TH</original>
    <variation>IR</variation>
    <location>
        <begin position="275"/>
        <end position="276"/>
    </location>
</feature>
<feature type="sequence variant" description="Depending on subunit.">
    <original>R</original>
    <variation>H</variation>
    <location>
        <position position="287"/>
    </location>
</feature>
<feature type="sequence variant" description="Depending on subunit.">
    <original>N</original>
    <variation>S</variation>
    <location>
        <position position="294"/>
    </location>
</feature>
<feature type="sequence variant" description="Depending on subunit.">
    <original>DNIAI</original>
    <variation>NGVPL</variation>
    <location>
        <begin position="414"/>
        <end position="418"/>
    </location>
</feature>
<feature type="sequence variant" description="Depending on subunit.">
    <original>H</original>
    <variation>R</variation>
    <location>
        <position position="421"/>
    </location>
</feature>
<feature type="sequence variant" description="Depending on subunit.">
    <original>T</original>
    <variation>I</variation>
    <location>
        <position position="423"/>
    </location>
</feature>
<feature type="sequence variant" description="Depending on subunit.">
    <original>E</original>
    <variation>K</variation>
    <location>
        <position position="444"/>
    </location>
</feature>
<feature type="sequence variant" description="Depending on subunit.">
    <original>E</original>
    <variation>A</variation>
    <location>
        <position position="447"/>
    </location>
</feature>
<feature type="sequence variant" description="Depending on subunit.">
    <original>D</original>
    <variation>E</variation>
    <location>
        <position position="463"/>
    </location>
</feature>
<feature type="sequence variant" description="Depending on subunit.">
    <original>D</original>
    <variation>I</variation>
    <location>
        <position position="463"/>
    </location>
</feature>
<feature type="sequence variant" description="Depending on subunit.">
    <original>E</original>
    <variation>D</variation>
    <location>
        <position position="465"/>
    </location>
</feature>
<feature type="sequence variant" description="Depending on subunit.">
    <original>R</original>
    <variation>L</variation>
    <location>
        <position position="467"/>
    </location>
</feature>
<feature type="sequence variant" description="Depending on subunit.">
    <original>R</original>
    <variation>S</variation>
    <location>
        <position position="467"/>
    </location>
</feature>
<feature type="sequence variant" description="Depending on subunit.">
    <original>H</original>
    <variation>N</variation>
    <location>
        <position position="469"/>
    </location>
</feature>
<feature type="sequence variant" description="Depending on subunit.">
    <original>E</original>
    <variation>D</variation>
    <location>
        <position position="471"/>
    </location>
</feature>
<feature type="sequence variant" description="Depending on subunit.">
    <original>K</original>
    <variation>H</variation>
    <location>
        <position position="474"/>
    </location>
</feature>
<feature type="sequence variant" description="Depending on subunit.">
    <original>L</original>
    <variation>Q</variation>
    <location>
        <position position="615"/>
    </location>
</feature>
<feature type="sequence variant" description="Depending on subunit.">
    <original>L</original>
    <variation>S</variation>
    <location>
        <position position="626"/>
    </location>
</feature>
<feature type="sequence variant" description="Depending on subunit.">
    <original>D</original>
    <variation>N</variation>
    <location>
        <position position="652"/>
    </location>
</feature>
<accession>P80888</accession>
<protein>
    <recommendedName>
        <fullName>Hemocyanin</fullName>
    </recommendedName>
</protein>
<proteinExistence type="evidence at protein level"/>
<organism>
    <name type="scientific">Palinurus vulgaris</name>
    <name type="common">European spiny lobster</name>
    <dbReference type="NCBI Taxonomy" id="6733"/>
    <lineage>
        <taxon>Eukaryota</taxon>
        <taxon>Metazoa</taxon>
        <taxon>Ecdysozoa</taxon>
        <taxon>Arthropoda</taxon>
        <taxon>Crustacea</taxon>
        <taxon>Multicrustacea</taxon>
        <taxon>Malacostraca</taxon>
        <taxon>Eumalacostraca</taxon>
        <taxon>Eucarida</taxon>
        <taxon>Decapoda</taxon>
        <taxon>Pleocyemata</taxon>
        <taxon>Achelata</taxon>
        <taxon>Palinuroidea</taxon>
        <taxon>Palinuridae</taxon>
        <taxon>Palinurus</taxon>
    </lineage>
</organism>
<evidence type="ECO:0000250" key="1"/>
<evidence type="ECO:0000305" key="2"/>
<comment type="function">
    <text>Hemocyanins are copper-containing oxygen carriers occurring freely dissolved in the hemolymph of many mollusks and arthropods.</text>
</comment>
<comment type="subunit">
    <text>It consists of at least four very similar subunits.</text>
</comment>
<comment type="subcellular location">
    <subcellularLocation>
        <location>Secreted</location>
        <location>Extracellular space</location>
    </subcellularLocation>
</comment>
<comment type="tissue specificity">
    <text>Hemolymph.</text>
</comment>
<comment type="similarity">
    <text evidence="2">Belongs to the tyrosinase family. Hemocyanin subfamily.</text>
</comment>
<comment type="caution">
    <text evidence="2">The sequence has been determined from a mixture of all the subunits and so the exact sequence as well as the relevance of the variants described is unknown for each subunit.</text>
</comment>
<name>HCY_PALVU</name>
<reference key="1">
    <citation type="journal article" date="1996" name="Comp. Biochem. Physiol.">
        <title>Primary structure of hemocyanin from Palinurus vulgaris.</title>
        <authorList>
            <person name="Jekel P.A."/>
            <person name="Neuteboom B."/>
            <person name="Beintema J.J."/>
        </authorList>
    </citation>
    <scope>PROTEIN SEQUENCE</scope>
</reference>